<keyword id="KW-1185">Reference proteome</keyword>
<keyword id="KW-0694">RNA-binding</keyword>
<keyword id="KW-0804">Transcription</keyword>
<keyword id="KW-0889">Transcription antitermination</keyword>
<keyword id="KW-0805">Transcription regulation</keyword>
<sequence>MRRRARELAMRALFAHTVGGMGLEEAFQHALEEMGGEEEGYAEPLDQEGVAFARRLLSGYKAHQEEVDRVLEETVEGWDFRQMAKTDLAVLRLAVYEMLYEPTPFEPLIEVAVKIANRYGGEHSGSFVNGVLARVYRRVAAGELKTVAKEA</sequence>
<proteinExistence type="inferred from homology"/>
<comment type="function">
    <text evidence="1">Involved in transcription antitermination. Required for transcription of ribosomal RNA (rRNA) genes. Binds specifically to the boxA antiterminator sequence of the ribosomal RNA (rrn) operons.</text>
</comment>
<comment type="similarity">
    <text evidence="1">Belongs to the NusB family.</text>
</comment>
<protein>
    <recommendedName>
        <fullName evidence="1">Transcription antitermination protein NusB</fullName>
    </recommendedName>
    <alternativeName>
        <fullName evidence="1">Antitermination factor NusB</fullName>
    </alternativeName>
</protein>
<dbReference type="EMBL" id="AP008226">
    <property type="protein sequence ID" value="BAD70944.1"/>
    <property type="molecule type" value="Genomic_DNA"/>
</dbReference>
<dbReference type="RefSeq" id="WP_008632549.1">
    <property type="nucleotide sequence ID" value="NC_006461.1"/>
</dbReference>
<dbReference type="RefSeq" id="YP_144387.1">
    <property type="nucleotide sequence ID" value="NC_006461.1"/>
</dbReference>
<dbReference type="SMR" id="Q5SJ93"/>
<dbReference type="EnsemblBacteria" id="BAD70944">
    <property type="protein sequence ID" value="BAD70944"/>
    <property type="gene ID" value="BAD70944"/>
</dbReference>
<dbReference type="GeneID" id="3168712"/>
<dbReference type="KEGG" id="ttj:TTHA1121"/>
<dbReference type="PATRIC" id="fig|300852.9.peg.1100"/>
<dbReference type="eggNOG" id="COG0781">
    <property type="taxonomic scope" value="Bacteria"/>
</dbReference>
<dbReference type="HOGENOM" id="CLU_087843_3_0_0"/>
<dbReference type="PhylomeDB" id="Q5SJ93"/>
<dbReference type="Proteomes" id="UP000000532">
    <property type="component" value="Chromosome"/>
</dbReference>
<dbReference type="GO" id="GO:0005829">
    <property type="term" value="C:cytosol"/>
    <property type="evidence" value="ECO:0007669"/>
    <property type="project" value="TreeGrafter"/>
</dbReference>
<dbReference type="GO" id="GO:0003723">
    <property type="term" value="F:RNA binding"/>
    <property type="evidence" value="ECO:0007669"/>
    <property type="project" value="UniProtKB-UniRule"/>
</dbReference>
<dbReference type="GO" id="GO:0006353">
    <property type="term" value="P:DNA-templated transcription termination"/>
    <property type="evidence" value="ECO:0007669"/>
    <property type="project" value="UniProtKB-UniRule"/>
</dbReference>
<dbReference type="GO" id="GO:0031564">
    <property type="term" value="P:transcription antitermination"/>
    <property type="evidence" value="ECO:0007669"/>
    <property type="project" value="UniProtKB-KW"/>
</dbReference>
<dbReference type="Gene3D" id="1.10.940.10">
    <property type="entry name" value="NusB-like"/>
    <property type="match status" value="1"/>
</dbReference>
<dbReference type="HAMAP" id="MF_00073">
    <property type="entry name" value="NusB"/>
    <property type="match status" value="1"/>
</dbReference>
<dbReference type="InterPro" id="IPR035926">
    <property type="entry name" value="NusB-like_sf"/>
</dbReference>
<dbReference type="InterPro" id="IPR011605">
    <property type="entry name" value="NusB_fam"/>
</dbReference>
<dbReference type="InterPro" id="IPR006027">
    <property type="entry name" value="NusB_RsmB_TIM44"/>
</dbReference>
<dbReference type="NCBIfam" id="TIGR01951">
    <property type="entry name" value="nusB"/>
    <property type="match status" value="1"/>
</dbReference>
<dbReference type="PANTHER" id="PTHR11078:SF3">
    <property type="entry name" value="ANTITERMINATION NUSB DOMAIN-CONTAINING PROTEIN"/>
    <property type="match status" value="1"/>
</dbReference>
<dbReference type="PANTHER" id="PTHR11078">
    <property type="entry name" value="N UTILIZATION SUBSTANCE PROTEIN B-RELATED"/>
    <property type="match status" value="1"/>
</dbReference>
<dbReference type="Pfam" id="PF01029">
    <property type="entry name" value="NusB"/>
    <property type="match status" value="1"/>
</dbReference>
<dbReference type="SUPFAM" id="SSF48013">
    <property type="entry name" value="NusB-like"/>
    <property type="match status" value="1"/>
</dbReference>
<evidence type="ECO:0000255" key="1">
    <source>
        <dbReference type="HAMAP-Rule" id="MF_00073"/>
    </source>
</evidence>
<name>NUSB_THET8</name>
<feature type="chain" id="PRO_0000265618" description="Transcription antitermination protein NusB">
    <location>
        <begin position="1"/>
        <end position="151"/>
    </location>
</feature>
<accession>Q5SJ93</accession>
<gene>
    <name evidence="1" type="primary">nusB</name>
    <name type="ordered locus">TTHA1121</name>
</gene>
<organism>
    <name type="scientific">Thermus thermophilus (strain ATCC 27634 / DSM 579 / HB8)</name>
    <dbReference type="NCBI Taxonomy" id="300852"/>
    <lineage>
        <taxon>Bacteria</taxon>
        <taxon>Thermotogati</taxon>
        <taxon>Deinococcota</taxon>
        <taxon>Deinococci</taxon>
        <taxon>Thermales</taxon>
        <taxon>Thermaceae</taxon>
        <taxon>Thermus</taxon>
    </lineage>
</organism>
<reference key="1">
    <citation type="submission" date="2004-11" db="EMBL/GenBank/DDBJ databases">
        <title>Complete genome sequence of Thermus thermophilus HB8.</title>
        <authorList>
            <person name="Masui R."/>
            <person name="Kurokawa K."/>
            <person name="Nakagawa N."/>
            <person name="Tokunaga F."/>
            <person name="Koyama Y."/>
            <person name="Shibata T."/>
            <person name="Oshima T."/>
            <person name="Yokoyama S."/>
            <person name="Yasunaga T."/>
            <person name="Kuramitsu S."/>
        </authorList>
    </citation>
    <scope>NUCLEOTIDE SEQUENCE [LARGE SCALE GENOMIC DNA]</scope>
    <source>
        <strain>ATCC 27634 / DSM 579 / HB8</strain>
    </source>
</reference>